<protein>
    <recommendedName>
        <fullName evidence="1">Small ribosomal subunit protein eS24</fullName>
    </recommendedName>
    <alternativeName>
        <fullName evidence="3">30S ribosomal protein S24e</fullName>
    </alternativeName>
</protein>
<keyword id="KW-0687">Ribonucleoprotein</keyword>
<keyword id="KW-0689">Ribosomal protein</keyword>
<accession>C3N6N7</accession>
<dbReference type="EMBL" id="CP001401">
    <property type="protein sequence ID" value="ACP55662.1"/>
    <property type="molecule type" value="Genomic_DNA"/>
</dbReference>
<dbReference type="RefSeq" id="WP_012711651.1">
    <property type="nucleotide sequence ID" value="NC_012632.1"/>
</dbReference>
<dbReference type="SMR" id="C3N6N7"/>
<dbReference type="KEGG" id="sim:M1627_1787"/>
<dbReference type="HOGENOM" id="CLU_107248_3_2_2"/>
<dbReference type="Proteomes" id="UP000002307">
    <property type="component" value="Chromosome"/>
</dbReference>
<dbReference type="GO" id="GO:1990904">
    <property type="term" value="C:ribonucleoprotein complex"/>
    <property type="evidence" value="ECO:0007669"/>
    <property type="project" value="UniProtKB-KW"/>
</dbReference>
<dbReference type="GO" id="GO:0005840">
    <property type="term" value="C:ribosome"/>
    <property type="evidence" value="ECO:0007669"/>
    <property type="project" value="UniProtKB-KW"/>
</dbReference>
<dbReference type="GO" id="GO:0003735">
    <property type="term" value="F:structural constituent of ribosome"/>
    <property type="evidence" value="ECO:0007669"/>
    <property type="project" value="InterPro"/>
</dbReference>
<dbReference type="GO" id="GO:0006412">
    <property type="term" value="P:translation"/>
    <property type="evidence" value="ECO:0007669"/>
    <property type="project" value="UniProtKB-UniRule"/>
</dbReference>
<dbReference type="Gene3D" id="3.30.70.3370">
    <property type="match status" value="1"/>
</dbReference>
<dbReference type="HAMAP" id="MF_00545">
    <property type="entry name" value="Ribosomal_eS24"/>
    <property type="match status" value="1"/>
</dbReference>
<dbReference type="InterPro" id="IPR053709">
    <property type="entry name" value="eRP_eS24_sf"/>
</dbReference>
<dbReference type="InterPro" id="IPR001976">
    <property type="entry name" value="Ribosomal_eS24"/>
</dbReference>
<dbReference type="InterPro" id="IPR018098">
    <property type="entry name" value="Ribosomal_eS24_CS"/>
</dbReference>
<dbReference type="InterPro" id="IPR012678">
    <property type="entry name" value="Ribosomal_uL23/eL15/eS24_sf"/>
</dbReference>
<dbReference type="PANTHER" id="PTHR10496">
    <property type="entry name" value="40S RIBOSOMAL PROTEIN S24"/>
    <property type="match status" value="1"/>
</dbReference>
<dbReference type="Pfam" id="PF01282">
    <property type="entry name" value="Ribosomal_S24e"/>
    <property type="match status" value="1"/>
</dbReference>
<dbReference type="SUPFAM" id="SSF54189">
    <property type="entry name" value="Ribosomal proteins S24e, L23 and L15e"/>
    <property type="match status" value="1"/>
</dbReference>
<dbReference type="PROSITE" id="PS00529">
    <property type="entry name" value="RIBOSOMAL_S24E"/>
    <property type="match status" value="1"/>
</dbReference>
<comment type="similarity">
    <text evidence="1">Belongs to the eukaryotic ribosomal protein eS24 family.</text>
</comment>
<evidence type="ECO:0000255" key="1">
    <source>
        <dbReference type="HAMAP-Rule" id="MF_00545"/>
    </source>
</evidence>
<evidence type="ECO:0000256" key="2">
    <source>
        <dbReference type="SAM" id="MobiDB-lite"/>
    </source>
</evidence>
<evidence type="ECO:0000305" key="3"/>
<name>RS24_SACI3</name>
<organism>
    <name type="scientific">Saccharolobus islandicus (strain M.16.27)</name>
    <name type="common">Sulfolobus islandicus</name>
    <dbReference type="NCBI Taxonomy" id="427318"/>
    <lineage>
        <taxon>Archaea</taxon>
        <taxon>Thermoproteota</taxon>
        <taxon>Thermoprotei</taxon>
        <taxon>Sulfolobales</taxon>
        <taxon>Sulfolobaceae</taxon>
        <taxon>Saccharolobus</taxon>
    </lineage>
</organism>
<proteinExistence type="inferred from homology"/>
<feature type="chain" id="PRO_1000211959" description="Small ribosomal subunit protein eS24">
    <location>
        <begin position="1"/>
        <end position="120"/>
    </location>
</feature>
<feature type="region of interest" description="Disordered" evidence="2">
    <location>
        <begin position="101"/>
        <end position="120"/>
    </location>
</feature>
<sequence>MESQAKVKISDKAEGIIERDVQNAVIGRREISLKVYHMGSGTPSRKDIIKAIIQAFASQENLVVVRKISTSYGAGISNVKLHIYKSREILEKIEPKYLLDRDAGTKQKKGGSKGGQGAKG</sequence>
<reference key="1">
    <citation type="journal article" date="2009" name="Proc. Natl. Acad. Sci. U.S.A.">
        <title>Biogeography of the Sulfolobus islandicus pan-genome.</title>
        <authorList>
            <person name="Reno M.L."/>
            <person name="Held N.L."/>
            <person name="Fields C.J."/>
            <person name="Burke P.V."/>
            <person name="Whitaker R.J."/>
        </authorList>
    </citation>
    <scope>NUCLEOTIDE SEQUENCE [LARGE SCALE GENOMIC DNA]</scope>
    <source>
        <strain>M.16.27</strain>
    </source>
</reference>
<gene>
    <name evidence="1" type="primary">rps24e</name>
    <name type="ordered locus">M1627_1787</name>
</gene>